<sequence>MARQKFSGKGGKGKSKKGQQSTAPRRRVEFKYKGFTLPELQEMPIKKFIEIVPARQRRTMSRGITPNQRKLVMKIKKARRLVNRGKEPRVIRTHCRDFVITPEMIGLTISIYTGKQFKEIKLVEETLGRFLGEMAPTRGIVQHGSPGMGATRGSMFVPIK</sequence>
<proteinExistence type="inferred from homology"/>
<keyword id="KW-0687">Ribonucleoprotein</keyword>
<keyword id="KW-0689">Ribosomal protein</keyword>
<keyword id="KW-0694">RNA-binding</keyword>
<keyword id="KW-0699">rRNA-binding</keyword>
<accession>A6UQJ4</accession>
<evidence type="ECO:0000255" key="1">
    <source>
        <dbReference type="HAMAP-Rule" id="MF_00531"/>
    </source>
</evidence>
<evidence type="ECO:0000256" key="2">
    <source>
        <dbReference type="SAM" id="MobiDB-lite"/>
    </source>
</evidence>
<evidence type="ECO:0000305" key="3"/>
<protein>
    <recommendedName>
        <fullName evidence="1">Small ribosomal subunit protein uS19</fullName>
    </recommendedName>
    <alternativeName>
        <fullName evidence="3">30S ribosomal protein S19</fullName>
    </alternativeName>
</protein>
<reference key="1">
    <citation type="submission" date="2007-06" db="EMBL/GenBank/DDBJ databases">
        <title>Complete sequence of Methanococcus vannielii SB.</title>
        <authorList>
            <consortium name="US DOE Joint Genome Institute"/>
            <person name="Copeland A."/>
            <person name="Lucas S."/>
            <person name="Lapidus A."/>
            <person name="Barry K."/>
            <person name="Glavina del Rio T."/>
            <person name="Dalin E."/>
            <person name="Tice H."/>
            <person name="Pitluck S."/>
            <person name="Chain P."/>
            <person name="Malfatti S."/>
            <person name="Shin M."/>
            <person name="Vergez L."/>
            <person name="Schmutz J."/>
            <person name="Larimer F."/>
            <person name="Land M."/>
            <person name="Hauser L."/>
            <person name="Kyrpides N."/>
            <person name="Anderson I."/>
            <person name="Sieprawska-Lupa M."/>
            <person name="Whitman W.B."/>
            <person name="Richardson P."/>
        </authorList>
    </citation>
    <scope>NUCLEOTIDE SEQUENCE [LARGE SCALE GENOMIC DNA]</scope>
    <source>
        <strain>ATCC 35089 / DSM 1224 / JCM 13029 / OCM 148 / SB</strain>
    </source>
</reference>
<feature type="chain" id="PRO_0000354317" description="Small ribosomal subunit protein uS19">
    <location>
        <begin position="1"/>
        <end position="160"/>
    </location>
</feature>
<feature type="region of interest" description="Disordered" evidence="2">
    <location>
        <begin position="1"/>
        <end position="27"/>
    </location>
</feature>
<comment type="function">
    <text evidence="1">Protein S19 forms a complex with S13 that binds strongly to the 16S ribosomal RNA.</text>
</comment>
<comment type="similarity">
    <text evidence="1">Belongs to the universal ribosomal protein uS19 family.</text>
</comment>
<dbReference type="EMBL" id="CP000742">
    <property type="protein sequence ID" value="ABR54766.1"/>
    <property type="molecule type" value="Genomic_DNA"/>
</dbReference>
<dbReference type="RefSeq" id="WP_011972667.1">
    <property type="nucleotide sequence ID" value="NC_009634.1"/>
</dbReference>
<dbReference type="SMR" id="A6UQJ4"/>
<dbReference type="STRING" id="406327.Mevan_0861"/>
<dbReference type="GeneID" id="5324905"/>
<dbReference type="KEGG" id="mvn:Mevan_0861"/>
<dbReference type="eggNOG" id="arCOG04099">
    <property type="taxonomic scope" value="Archaea"/>
</dbReference>
<dbReference type="HOGENOM" id="CLU_097347_1_1_2"/>
<dbReference type="OrthoDB" id="30559at2157"/>
<dbReference type="Proteomes" id="UP000001107">
    <property type="component" value="Chromosome"/>
</dbReference>
<dbReference type="GO" id="GO:0022627">
    <property type="term" value="C:cytosolic small ribosomal subunit"/>
    <property type="evidence" value="ECO:0007669"/>
    <property type="project" value="TreeGrafter"/>
</dbReference>
<dbReference type="GO" id="GO:0019843">
    <property type="term" value="F:rRNA binding"/>
    <property type="evidence" value="ECO:0007669"/>
    <property type="project" value="UniProtKB-UniRule"/>
</dbReference>
<dbReference type="GO" id="GO:0003735">
    <property type="term" value="F:structural constituent of ribosome"/>
    <property type="evidence" value="ECO:0007669"/>
    <property type="project" value="InterPro"/>
</dbReference>
<dbReference type="GO" id="GO:0000028">
    <property type="term" value="P:ribosomal small subunit assembly"/>
    <property type="evidence" value="ECO:0007669"/>
    <property type="project" value="TreeGrafter"/>
</dbReference>
<dbReference type="GO" id="GO:0006412">
    <property type="term" value="P:translation"/>
    <property type="evidence" value="ECO:0007669"/>
    <property type="project" value="UniProtKB-UniRule"/>
</dbReference>
<dbReference type="FunFam" id="3.30.860.10:FF:000002">
    <property type="entry name" value="40S ribosomal protein S15"/>
    <property type="match status" value="1"/>
</dbReference>
<dbReference type="Gene3D" id="3.30.860.10">
    <property type="entry name" value="30s Ribosomal Protein S19, Chain A"/>
    <property type="match status" value="1"/>
</dbReference>
<dbReference type="HAMAP" id="MF_00531">
    <property type="entry name" value="Ribosomal_uS19"/>
    <property type="match status" value="1"/>
</dbReference>
<dbReference type="InterPro" id="IPR002222">
    <property type="entry name" value="Ribosomal_uS19"/>
</dbReference>
<dbReference type="InterPro" id="IPR020934">
    <property type="entry name" value="Ribosomal_uS19_CS"/>
</dbReference>
<dbReference type="InterPro" id="IPR005713">
    <property type="entry name" value="Ribosomal_uS19_euk/arc"/>
</dbReference>
<dbReference type="InterPro" id="IPR023575">
    <property type="entry name" value="Ribosomal_uS19_SF"/>
</dbReference>
<dbReference type="NCBIfam" id="NF003121">
    <property type="entry name" value="PRK04038.1"/>
    <property type="match status" value="1"/>
</dbReference>
<dbReference type="NCBIfam" id="TIGR01025">
    <property type="entry name" value="uS19_arch"/>
    <property type="match status" value="1"/>
</dbReference>
<dbReference type="PANTHER" id="PTHR11880">
    <property type="entry name" value="RIBOSOMAL PROTEIN S19P FAMILY MEMBER"/>
    <property type="match status" value="1"/>
</dbReference>
<dbReference type="PANTHER" id="PTHR11880:SF2">
    <property type="entry name" value="SMALL RIBOSOMAL SUBUNIT PROTEIN US19"/>
    <property type="match status" value="1"/>
</dbReference>
<dbReference type="Pfam" id="PF00203">
    <property type="entry name" value="Ribosomal_S19"/>
    <property type="match status" value="1"/>
</dbReference>
<dbReference type="PIRSF" id="PIRSF002144">
    <property type="entry name" value="Ribosomal_S19"/>
    <property type="match status" value="1"/>
</dbReference>
<dbReference type="PRINTS" id="PR00975">
    <property type="entry name" value="RIBOSOMALS19"/>
</dbReference>
<dbReference type="SUPFAM" id="SSF54570">
    <property type="entry name" value="Ribosomal protein S19"/>
    <property type="match status" value="1"/>
</dbReference>
<dbReference type="PROSITE" id="PS00323">
    <property type="entry name" value="RIBOSOMAL_S19"/>
    <property type="match status" value="1"/>
</dbReference>
<gene>
    <name evidence="1" type="primary">rps19</name>
    <name type="ordered locus">Mevan_0861</name>
</gene>
<name>RS19_METVS</name>
<organism>
    <name type="scientific">Methanococcus vannielii (strain ATCC 35089 / DSM 1224 / JCM 13029 / OCM 148 / SB)</name>
    <dbReference type="NCBI Taxonomy" id="406327"/>
    <lineage>
        <taxon>Archaea</taxon>
        <taxon>Methanobacteriati</taxon>
        <taxon>Methanobacteriota</taxon>
        <taxon>Methanomada group</taxon>
        <taxon>Methanococci</taxon>
        <taxon>Methanococcales</taxon>
        <taxon>Methanococcaceae</taxon>
        <taxon>Methanococcus</taxon>
    </lineage>
</organism>